<comment type="function">
    <text evidence="1">One of the primary rRNA binding proteins, it binds directly to 16S rRNA where it nucleates assembly of the body of the 30S subunit.</text>
</comment>
<comment type="function">
    <text evidence="1">With S5 and S12 plays an important role in translational accuracy.</text>
</comment>
<comment type="subunit">
    <text evidence="1">Part of the 30S ribosomal subunit. Contacts protein S5. The interaction surface between S4 and S5 is involved in control of translational fidelity.</text>
</comment>
<comment type="similarity">
    <text evidence="1">Belongs to the universal ribosomal protein uS4 family.</text>
</comment>
<evidence type="ECO:0000255" key="1">
    <source>
        <dbReference type="HAMAP-Rule" id="MF_01306"/>
    </source>
</evidence>
<evidence type="ECO:0000256" key="2">
    <source>
        <dbReference type="SAM" id="MobiDB-lite"/>
    </source>
</evidence>
<evidence type="ECO:0000305" key="3"/>
<evidence type="ECO:0007829" key="4">
    <source>
        <dbReference type="PDB" id="7M4U"/>
    </source>
</evidence>
<keyword id="KW-0002">3D-structure</keyword>
<keyword id="KW-0687">Ribonucleoprotein</keyword>
<keyword id="KW-0689">Ribosomal protein</keyword>
<keyword id="KW-0694">RNA-binding</keyword>
<keyword id="KW-0699">rRNA-binding</keyword>
<gene>
    <name evidence="1" type="primary">rpsD</name>
    <name type="ordered locus">AB57_3506</name>
</gene>
<proteinExistence type="evidence at protein level"/>
<feature type="chain" id="PRO_1000140669" description="Small ribosomal subunit protein uS4">
    <location>
        <begin position="1"/>
        <end position="208"/>
    </location>
</feature>
<feature type="domain" description="S4 RNA-binding" evidence="1">
    <location>
        <begin position="98"/>
        <end position="160"/>
    </location>
</feature>
<feature type="region of interest" description="Disordered" evidence="2">
    <location>
        <begin position="24"/>
        <end position="52"/>
    </location>
</feature>
<feature type="helix" evidence="4">
    <location>
        <begin position="9"/>
        <end position="15"/>
    </location>
</feature>
<feature type="helix" evidence="4">
    <location>
        <begin position="28"/>
        <end position="32"/>
    </location>
</feature>
<feature type="helix" evidence="4">
    <location>
        <begin position="52"/>
        <end position="67"/>
    </location>
</feature>
<feature type="helix" evidence="4">
    <location>
        <begin position="71"/>
        <end position="83"/>
    </location>
</feature>
<feature type="strand" evidence="4">
    <location>
        <begin position="84"/>
        <end position="86"/>
    </location>
</feature>
<feature type="helix" evidence="4">
    <location>
        <begin position="88"/>
        <end position="97"/>
    </location>
</feature>
<feature type="helix" evidence="4">
    <location>
        <begin position="100"/>
        <end position="106"/>
    </location>
</feature>
<feature type="helix" evidence="4">
    <location>
        <begin position="113"/>
        <end position="121"/>
    </location>
</feature>
<feature type="strand" evidence="4">
    <location>
        <begin position="125"/>
        <end position="127"/>
    </location>
</feature>
<feature type="strand" evidence="4">
    <location>
        <begin position="144"/>
        <end position="147"/>
    </location>
</feature>
<feature type="turn" evidence="4">
    <location>
        <begin position="149"/>
        <end position="151"/>
    </location>
</feature>
<feature type="helix" evidence="4">
    <location>
        <begin position="155"/>
        <end position="166"/>
    </location>
</feature>
<feature type="strand" evidence="4">
    <location>
        <begin position="173"/>
        <end position="176"/>
    </location>
</feature>
<feature type="turn" evidence="4">
    <location>
        <begin position="177"/>
        <end position="180"/>
    </location>
</feature>
<feature type="strand" evidence="4">
    <location>
        <begin position="181"/>
        <end position="184"/>
    </location>
</feature>
<feature type="turn" evidence="4">
    <location>
        <begin position="190"/>
        <end position="192"/>
    </location>
</feature>
<feature type="helix" evidence="4">
    <location>
        <begin position="199"/>
        <end position="207"/>
    </location>
</feature>
<name>RS4_ACIB5</name>
<accession>B7IA15</accession>
<reference key="1">
    <citation type="journal article" date="2008" name="J. Bacteriol.">
        <title>Comparative genome sequence analysis of multidrug-resistant Acinetobacter baumannii.</title>
        <authorList>
            <person name="Adams M.D."/>
            <person name="Goglin K."/>
            <person name="Molyneaux N."/>
            <person name="Hujer K.M."/>
            <person name="Lavender H."/>
            <person name="Jamison J.J."/>
            <person name="MacDonald I.J."/>
            <person name="Martin K.M."/>
            <person name="Russo T."/>
            <person name="Campagnari A.A."/>
            <person name="Hujer A.M."/>
            <person name="Bonomo R.A."/>
            <person name="Gill S.R."/>
        </authorList>
    </citation>
    <scope>NUCLEOTIDE SEQUENCE [LARGE SCALE GENOMIC DNA]</scope>
    <source>
        <strain>AB0057</strain>
    </source>
</reference>
<sequence>MARYIGPKCKLSRREGTDLQLKSGVKPFDVKTKKANKAPGQHGQARGGKQSEYSLQLREKQKVRRIYGVLERQFSNYYKEAARVKGATGENLLKLLESRLDNVVYRMGFGSTRAEARQLVSHRSITLNGRRVNIASIQVKAGDVIAVHEGAKQQLRIKNAIELAAQRGIPAWIEVDHSKLEGTFKAAPDRSDLPAEINESLIVELYSK</sequence>
<protein>
    <recommendedName>
        <fullName evidence="1">Small ribosomal subunit protein uS4</fullName>
    </recommendedName>
    <alternativeName>
        <fullName evidence="3">30S ribosomal protein S4</fullName>
    </alternativeName>
</protein>
<dbReference type="EMBL" id="CP001182">
    <property type="protein sequence ID" value="ACJ42873.1"/>
    <property type="molecule type" value="Genomic_DNA"/>
</dbReference>
<dbReference type="RefSeq" id="WP_000135204.1">
    <property type="nucleotide sequence ID" value="NC_011586.2"/>
</dbReference>
<dbReference type="PDB" id="6V39">
    <property type="method" value="EM"/>
    <property type="resolution" value="3.04 A"/>
    <property type="chains" value="d=1-208"/>
</dbReference>
<dbReference type="PDB" id="6V3A">
    <property type="method" value="EM"/>
    <property type="resolution" value="2.82 A"/>
    <property type="chains" value="d=1-208"/>
</dbReference>
<dbReference type="PDB" id="6V3B">
    <property type="method" value="EM"/>
    <property type="resolution" value="2.91 A"/>
    <property type="chains" value="d=1-208"/>
</dbReference>
<dbReference type="PDB" id="6V3E">
    <property type="method" value="EM"/>
    <property type="resolution" value="4.40 A"/>
    <property type="chains" value="d=1-208"/>
</dbReference>
<dbReference type="PDB" id="7M4U">
    <property type="method" value="EM"/>
    <property type="resolution" value="2.71 A"/>
    <property type="chains" value="d=1-208"/>
</dbReference>
<dbReference type="PDB" id="7M4W">
    <property type="method" value="EM"/>
    <property type="resolution" value="2.55 A"/>
    <property type="chains" value="d=1-208"/>
</dbReference>
<dbReference type="PDB" id="7M4X">
    <property type="method" value="EM"/>
    <property type="resolution" value="2.66 A"/>
    <property type="chains" value="d=1-208"/>
</dbReference>
<dbReference type="PDB" id="7M4Y">
    <property type="method" value="EM"/>
    <property type="resolution" value="2.50 A"/>
    <property type="chains" value="d=1-208"/>
</dbReference>
<dbReference type="PDB" id="7M4Z">
    <property type="method" value="EM"/>
    <property type="resolution" value="2.92 A"/>
    <property type="chains" value="d=1-208"/>
</dbReference>
<dbReference type="PDB" id="7RYF">
    <property type="method" value="EM"/>
    <property type="resolution" value="2.65 A"/>
    <property type="chains" value="d=1-208"/>
</dbReference>
<dbReference type="PDB" id="7RYG">
    <property type="method" value="EM"/>
    <property type="resolution" value="2.38 A"/>
    <property type="chains" value="d=1-208"/>
</dbReference>
<dbReference type="PDB" id="7RYH">
    <property type="method" value="EM"/>
    <property type="resolution" value="2.43 A"/>
    <property type="chains" value="d=1-208"/>
</dbReference>
<dbReference type="PDB" id="7UVV">
    <property type="method" value="EM"/>
    <property type="resolution" value="2.50 A"/>
    <property type="chains" value="d=1-208"/>
</dbReference>
<dbReference type="PDB" id="7UVW">
    <property type="method" value="EM"/>
    <property type="resolution" value="2.37 A"/>
    <property type="chains" value="d=1-208"/>
</dbReference>
<dbReference type="PDB" id="7UVX">
    <property type="method" value="EM"/>
    <property type="resolution" value="2.35 A"/>
    <property type="chains" value="d=1-208"/>
</dbReference>
<dbReference type="PDB" id="7UVY">
    <property type="method" value="EM"/>
    <property type="resolution" value="2.39 A"/>
    <property type="chains" value="d=1-208"/>
</dbReference>
<dbReference type="PDB" id="7UVZ">
    <property type="method" value="EM"/>
    <property type="resolution" value="2.21 A"/>
    <property type="chains" value="d=1-208"/>
</dbReference>
<dbReference type="PDB" id="7UW1">
    <property type="method" value="EM"/>
    <property type="resolution" value="2.21 A"/>
    <property type="chains" value="d=1-208"/>
</dbReference>
<dbReference type="PDBsum" id="6V39"/>
<dbReference type="PDBsum" id="6V3A"/>
<dbReference type="PDBsum" id="6V3B"/>
<dbReference type="PDBsum" id="6V3E"/>
<dbReference type="PDBsum" id="7M4U"/>
<dbReference type="PDBsum" id="7M4W"/>
<dbReference type="PDBsum" id="7M4X"/>
<dbReference type="PDBsum" id="7M4Y"/>
<dbReference type="PDBsum" id="7M4Z"/>
<dbReference type="PDBsum" id="7RYF"/>
<dbReference type="PDBsum" id="7RYG"/>
<dbReference type="PDBsum" id="7RYH"/>
<dbReference type="PDBsum" id="7UVV"/>
<dbReference type="PDBsum" id="7UVW"/>
<dbReference type="PDBsum" id="7UVX"/>
<dbReference type="PDBsum" id="7UVY"/>
<dbReference type="PDBsum" id="7UVZ"/>
<dbReference type="PDBsum" id="7UW1"/>
<dbReference type="EMDB" id="EMD-21030"/>
<dbReference type="EMDB" id="EMD-21031"/>
<dbReference type="EMDB" id="EMD-21032"/>
<dbReference type="EMDB" id="EMD-21034"/>
<dbReference type="EMDB" id="EMD-23666"/>
<dbReference type="EMDB" id="EMD-23668"/>
<dbReference type="EMDB" id="EMD-23669"/>
<dbReference type="EMDB" id="EMD-23670"/>
<dbReference type="EMDB" id="EMD-23671"/>
<dbReference type="EMDB" id="EMD-24738"/>
<dbReference type="EMDB" id="EMD-24739"/>
<dbReference type="EMDB" id="EMD-24740"/>
<dbReference type="EMDB" id="EMD-26817"/>
<dbReference type="EMDB" id="EMD-26818"/>
<dbReference type="EMDB" id="EMD-26819"/>
<dbReference type="EMDB" id="EMD-26820"/>
<dbReference type="EMDB" id="EMD-26821"/>
<dbReference type="EMDB" id="EMD-26822"/>
<dbReference type="SMR" id="B7IA15"/>
<dbReference type="IntAct" id="B7IA15">
    <property type="interactions" value="1"/>
</dbReference>
<dbReference type="GeneID" id="92895293"/>
<dbReference type="KEGG" id="abn:AB57_3506"/>
<dbReference type="HOGENOM" id="CLU_092403_0_2_6"/>
<dbReference type="Proteomes" id="UP000007094">
    <property type="component" value="Chromosome"/>
</dbReference>
<dbReference type="GO" id="GO:0015935">
    <property type="term" value="C:small ribosomal subunit"/>
    <property type="evidence" value="ECO:0007669"/>
    <property type="project" value="InterPro"/>
</dbReference>
<dbReference type="GO" id="GO:0019843">
    <property type="term" value="F:rRNA binding"/>
    <property type="evidence" value="ECO:0007669"/>
    <property type="project" value="UniProtKB-UniRule"/>
</dbReference>
<dbReference type="GO" id="GO:0003735">
    <property type="term" value="F:structural constituent of ribosome"/>
    <property type="evidence" value="ECO:0007669"/>
    <property type="project" value="InterPro"/>
</dbReference>
<dbReference type="GO" id="GO:0042274">
    <property type="term" value="P:ribosomal small subunit biogenesis"/>
    <property type="evidence" value="ECO:0007669"/>
    <property type="project" value="TreeGrafter"/>
</dbReference>
<dbReference type="GO" id="GO:0006412">
    <property type="term" value="P:translation"/>
    <property type="evidence" value="ECO:0007669"/>
    <property type="project" value="UniProtKB-UniRule"/>
</dbReference>
<dbReference type="CDD" id="cd00165">
    <property type="entry name" value="S4"/>
    <property type="match status" value="1"/>
</dbReference>
<dbReference type="FunFam" id="1.10.1050.10:FF:000001">
    <property type="entry name" value="30S ribosomal protein S4"/>
    <property type="match status" value="1"/>
</dbReference>
<dbReference type="FunFam" id="3.10.290.10:FF:000001">
    <property type="entry name" value="30S ribosomal protein S4"/>
    <property type="match status" value="1"/>
</dbReference>
<dbReference type="Gene3D" id="1.10.1050.10">
    <property type="entry name" value="Ribosomal Protein S4 Delta 41, Chain A, domain 1"/>
    <property type="match status" value="1"/>
</dbReference>
<dbReference type="Gene3D" id="3.10.290.10">
    <property type="entry name" value="RNA-binding S4 domain"/>
    <property type="match status" value="1"/>
</dbReference>
<dbReference type="HAMAP" id="MF_01306_B">
    <property type="entry name" value="Ribosomal_uS4_B"/>
    <property type="match status" value="1"/>
</dbReference>
<dbReference type="InterPro" id="IPR022801">
    <property type="entry name" value="Ribosomal_uS4"/>
</dbReference>
<dbReference type="InterPro" id="IPR005709">
    <property type="entry name" value="Ribosomal_uS4_bac-type"/>
</dbReference>
<dbReference type="InterPro" id="IPR018079">
    <property type="entry name" value="Ribosomal_uS4_CS"/>
</dbReference>
<dbReference type="InterPro" id="IPR001912">
    <property type="entry name" value="Ribosomal_uS4_N"/>
</dbReference>
<dbReference type="InterPro" id="IPR002942">
    <property type="entry name" value="S4_RNA-bd"/>
</dbReference>
<dbReference type="InterPro" id="IPR036986">
    <property type="entry name" value="S4_RNA-bd_sf"/>
</dbReference>
<dbReference type="NCBIfam" id="NF003717">
    <property type="entry name" value="PRK05327.1"/>
    <property type="match status" value="1"/>
</dbReference>
<dbReference type="NCBIfam" id="TIGR01017">
    <property type="entry name" value="rpsD_bact"/>
    <property type="match status" value="1"/>
</dbReference>
<dbReference type="PANTHER" id="PTHR11831">
    <property type="entry name" value="30S 40S RIBOSOMAL PROTEIN"/>
    <property type="match status" value="1"/>
</dbReference>
<dbReference type="PANTHER" id="PTHR11831:SF4">
    <property type="entry name" value="SMALL RIBOSOMAL SUBUNIT PROTEIN US4M"/>
    <property type="match status" value="1"/>
</dbReference>
<dbReference type="Pfam" id="PF00163">
    <property type="entry name" value="Ribosomal_S4"/>
    <property type="match status" value="1"/>
</dbReference>
<dbReference type="Pfam" id="PF01479">
    <property type="entry name" value="S4"/>
    <property type="match status" value="1"/>
</dbReference>
<dbReference type="SMART" id="SM01390">
    <property type="entry name" value="Ribosomal_S4"/>
    <property type="match status" value="1"/>
</dbReference>
<dbReference type="SMART" id="SM00363">
    <property type="entry name" value="S4"/>
    <property type="match status" value="1"/>
</dbReference>
<dbReference type="SUPFAM" id="SSF55174">
    <property type="entry name" value="Alpha-L RNA-binding motif"/>
    <property type="match status" value="1"/>
</dbReference>
<dbReference type="PROSITE" id="PS00632">
    <property type="entry name" value="RIBOSOMAL_S4"/>
    <property type="match status" value="1"/>
</dbReference>
<dbReference type="PROSITE" id="PS50889">
    <property type="entry name" value="S4"/>
    <property type="match status" value="1"/>
</dbReference>
<organism>
    <name type="scientific">Acinetobacter baumannii (strain AB0057)</name>
    <dbReference type="NCBI Taxonomy" id="480119"/>
    <lineage>
        <taxon>Bacteria</taxon>
        <taxon>Pseudomonadati</taxon>
        <taxon>Pseudomonadota</taxon>
        <taxon>Gammaproteobacteria</taxon>
        <taxon>Moraxellales</taxon>
        <taxon>Moraxellaceae</taxon>
        <taxon>Acinetobacter</taxon>
        <taxon>Acinetobacter calcoaceticus/baumannii complex</taxon>
    </lineage>
</organism>